<dbReference type="EMBL" id="CP001348">
    <property type="protein sequence ID" value="ACL76270.1"/>
    <property type="molecule type" value="Genomic_DNA"/>
</dbReference>
<dbReference type="RefSeq" id="WP_015925374.1">
    <property type="nucleotide sequence ID" value="NC_011898.1"/>
</dbReference>
<dbReference type="SMR" id="B8I3C7"/>
<dbReference type="STRING" id="394503.Ccel_1922"/>
<dbReference type="KEGG" id="cce:Ccel_1922"/>
<dbReference type="eggNOG" id="COG0231">
    <property type="taxonomic scope" value="Bacteria"/>
</dbReference>
<dbReference type="HOGENOM" id="CLU_074944_0_1_9"/>
<dbReference type="OrthoDB" id="9801844at2"/>
<dbReference type="UniPathway" id="UPA00345"/>
<dbReference type="Proteomes" id="UP000001349">
    <property type="component" value="Chromosome"/>
</dbReference>
<dbReference type="GO" id="GO:0005737">
    <property type="term" value="C:cytoplasm"/>
    <property type="evidence" value="ECO:0007669"/>
    <property type="project" value="UniProtKB-SubCell"/>
</dbReference>
<dbReference type="GO" id="GO:0003746">
    <property type="term" value="F:translation elongation factor activity"/>
    <property type="evidence" value="ECO:0007669"/>
    <property type="project" value="UniProtKB-UniRule"/>
</dbReference>
<dbReference type="GO" id="GO:0043043">
    <property type="term" value="P:peptide biosynthetic process"/>
    <property type="evidence" value="ECO:0007669"/>
    <property type="project" value="InterPro"/>
</dbReference>
<dbReference type="CDD" id="cd04470">
    <property type="entry name" value="S1_EF-P_repeat_1"/>
    <property type="match status" value="1"/>
</dbReference>
<dbReference type="CDD" id="cd05794">
    <property type="entry name" value="S1_EF-P_repeat_2"/>
    <property type="match status" value="1"/>
</dbReference>
<dbReference type="FunFam" id="2.30.30.30:FF:000003">
    <property type="entry name" value="Elongation factor P"/>
    <property type="match status" value="1"/>
</dbReference>
<dbReference type="FunFam" id="2.40.50.140:FF:000004">
    <property type="entry name" value="Elongation factor P"/>
    <property type="match status" value="1"/>
</dbReference>
<dbReference type="FunFam" id="2.40.50.140:FF:000009">
    <property type="entry name" value="Elongation factor P"/>
    <property type="match status" value="1"/>
</dbReference>
<dbReference type="Gene3D" id="2.30.30.30">
    <property type="match status" value="1"/>
</dbReference>
<dbReference type="Gene3D" id="2.40.50.140">
    <property type="entry name" value="Nucleic acid-binding proteins"/>
    <property type="match status" value="2"/>
</dbReference>
<dbReference type="HAMAP" id="MF_00141">
    <property type="entry name" value="EF_P"/>
    <property type="match status" value="1"/>
</dbReference>
<dbReference type="InterPro" id="IPR015365">
    <property type="entry name" value="Elong-fact-P_C"/>
</dbReference>
<dbReference type="InterPro" id="IPR012340">
    <property type="entry name" value="NA-bd_OB-fold"/>
</dbReference>
<dbReference type="InterPro" id="IPR014722">
    <property type="entry name" value="Rib_uL2_dom2"/>
</dbReference>
<dbReference type="InterPro" id="IPR020599">
    <property type="entry name" value="Transl_elong_fac_P/YeiP"/>
</dbReference>
<dbReference type="InterPro" id="IPR013185">
    <property type="entry name" value="Transl_elong_KOW-like"/>
</dbReference>
<dbReference type="InterPro" id="IPR001059">
    <property type="entry name" value="Transl_elong_P/YeiP_cen"/>
</dbReference>
<dbReference type="InterPro" id="IPR013852">
    <property type="entry name" value="Transl_elong_P/YeiP_CS"/>
</dbReference>
<dbReference type="InterPro" id="IPR011768">
    <property type="entry name" value="Transl_elongation_fac_P"/>
</dbReference>
<dbReference type="InterPro" id="IPR008991">
    <property type="entry name" value="Translation_prot_SH3-like_sf"/>
</dbReference>
<dbReference type="NCBIfam" id="TIGR00038">
    <property type="entry name" value="efp"/>
    <property type="match status" value="1"/>
</dbReference>
<dbReference type="NCBIfam" id="NF001810">
    <property type="entry name" value="PRK00529.1"/>
    <property type="match status" value="1"/>
</dbReference>
<dbReference type="PANTHER" id="PTHR30053">
    <property type="entry name" value="ELONGATION FACTOR P"/>
    <property type="match status" value="1"/>
</dbReference>
<dbReference type="PANTHER" id="PTHR30053:SF12">
    <property type="entry name" value="ELONGATION FACTOR P (EF-P) FAMILY PROTEIN"/>
    <property type="match status" value="1"/>
</dbReference>
<dbReference type="Pfam" id="PF01132">
    <property type="entry name" value="EFP"/>
    <property type="match status" value="1"/>
</dbReference>
<dbReference type="Pfam" id="PF08207">
    <property type="entry name" value="EFP_N"/>
    <property type="match status" value="1"/>
</dbReference>
<dbReference type="Pfam" id="PF09285">
    <property type="entry name" value="Elong-fact-P_C"/>
    <property type="match status" value="1"/>
</dbReference>
<dbReference type="PIRSF" id="PIRSF005901">
    <property type="entry name" value="EF-P"/>
    <property type="match status" value="1"/>
</dbReference>
<dbReference type="SMART" id="SM01185">
    <property type="entry name" value="EFP"/>
    <property type="match status" value="1"/>
</dbReference>
<dbReference type="SMART" id="SM00841">
    <property type="entry name" value="Elong-fact-P_C"/>
    <property type="match status" value="1"/>
</dbReference>
<dbReference type="SUPFAM" id="SSF50249">
    <property type="entry name" value="Nucleic acid-binding proteins"/>
    <property type="match status" value="2"/>
</dbReference>
<dbReference type="SUPFAM" id="SSF50104">
    <property type="entry name" value="Translation proteins SH3-like domain"/>
    <property type="match status" value="1"/>
</dbReference>
<dbReference type="PROSITE" id="PS01275">
    <property type="entry name" value="EFP"/>
    <property type="match status" value="1"/>
</dbReference>
<sequence length="186" mass="20986">MIVAGDFKNGVTFELDNNIFQVVEFQHVKPGKGAAFVRTKLKNIITGATVERTFNPTDKMPKAHIERKDMQYLYNDGDLYYFMDVESYEQLPINKETIGNTLDLVKENDIVKILSHKGNVFGIEPPTFVELEVTETDPGFKGDTATGATKPATVETGYVIKVPLFVNTGDIIRIDTRTNEYMERVK</sequence>
<protein>
    <recommendedName>
        <fullName evidence="1">Elongation factor P</fullName>
        <shortName evidence="1">EF-P</shortName>
    </recommendedName>
</protein>
<feature type="chain" id="PRO_1000123002" description="Elongation factor P">
    <location>
        <begin position="1"/>
        <end position="186"/>
    </location>
</feature>
<keyword id="KW-0963">Cytoplasm</keyword>
<keyword id="KW-0251">Elongation factor</keyword>
<keyword id="KW-0648">Protein biosynthesis</keyword>
<keyword id="KW-1185">Reference proteome</keyword>
<proteinExistence type="inferred from homology"/>
<reference key="1">
    <citation type="submission" date="2009-01" db="EMBL/GenBank/DDBJ databases">
        <title>Complete sequence of Clostridium cellulolyticum H10.</title>
        <authorList>
            <consortium name="US DOE Joint Genome Institute"/>
            <person name="Lucas S."/>
            <person name="Copeland A."/>
            <person name="Lapidus A."/>
            <person name="Glavina del Rio T."/>
            <person name="Dalin E."/>
            <person name="Tice H."/>
            <person name="Bruce D."/>
            <person name="Goodwin L."/>
            <person name="Pitluck S."/>
            <person name="Chertkov O."/>
            <person name="Saunders E."/>
            <person name="Brettin T."/>
            <person name="Detter J.C."/>
            <person name="Han C."/>
            <person name="Larimer F."/>
            <person name="Land M."/>
            <person name="Hauser L."/>
            <person name="Kyrpides N."/>
            <person name="Ivanova N."/>
            <person name="Zhou J."/>
            <person name="Richardson P."/>
        </authorList>
    </citation>
    <scope>NUCLEOTIDE SEQUENCE [LARGE SCALE GENOMIC DNA]</scope>
    <source>
        <strain>ATCC 35319 / DSM 5812 / JCM 6584 / H10</strain>
    </source>
</reference>
<accession>B8I3C7</accession>
<gene>
    <name evidence="1" type="primary">efp</name>
    <name type="ordered locus">Ccel_1922</name>
</gene>
<name>EFP_RUMCH</name>
<organism>
    <name type="scientific">Ruminiclostridium cellulolyticum (strain ATCC 35319 / DSM 5812 / JCM 6584 / H10)</name>
    <name type="common">Clostridium cellulolyticum</name>
    <dbReference type="NCBI Taxonomy" id="394503"/>
    <lineage>
        <taxon>Bacteria</taxon>
        <taxon>Bacillati</taxon>
        <taxon>Bacillota</taxon>
        <taxon>Clostridia</taxon>
        <taxon>Eubacteriales</taxon>
        <taxon>Oscillospiraceae</taxon>
        <taxon>Ruminiclostridium</taxon>
    </lineage>
</organism>
<evidence type="ECO:0000255" key="1">
    <source>
        <dbReference type="HAMAP-Rule" id="MF_00141"/>
    </source>
</evidence>
<comment type="function">
    <text evidence="1">Involved in peptide bond synthesis. Stimulates efficient translation and peptide-bond synthesis on native or reconstituted 70S ribosomes in vitro. Probably functions indirectly by altering the affinity of the ribosome for aminoacyl-tRNA, thus increasing their reactivity as acceptors for peptidyl transferase.</text>
</comment>
<comment type="pathway">
    <text evidence="1">Protein biosynthesis; polypeptide chain elongation.</text>
</comment>
<comment type="subcellular location">
    <subcellularLocation>
        <location evidence="1">Cytoplasm</location>
    </subcellularLocation>
</comment>
<comment type="similarity">
    <text evidence="1">Belongs to the elongation factor P family.</text>
</comment>